<feature type="chain" id="PRO_0000236664" description="Phosphoribosylformylglycinamidine synthase subunit PurL">
    <location>
        <begin position="1"/>
        <end position="754"/>
    </location>
</feature>
<feature type="active site" evidence="1">
    <location>
        <position position="52"/>
    </location>
</feature>
<feature type="active site" description="Proton acceptor" evidence="1">
    <location>
        <position position="99"/>
    </location>
</feature>
<feature type="binding site" evidence="1">
    <location>
        <position position="55"/>
    </location>
    <ligand>
        <name>ATP</name>
        <dbReference type="ChEBI" id="CHEBI:30616"/>
    </ligand>
</feature>
<feature type="binding site" evidence="1">
    <location>
        <position position="95"/>
    </location>
    <ligand>
        <name>ATP</name>
        <dbReference type="ChEBI" id="CHEBI:30616"/>
    </ligand>
</feature>
<feature type="binding site" evidence="1">
    <location>
        <position position="97"/>
    </location>
    <ligand>
        <name>Mg(2+)</name>
        <dbReference type="ChEBI" id="CHEBI:18420"/>
        <label>1</label>
    </ligand>
</feature>
<feature type="binding site" evidence="1">
    <location>
        <begin position="98"/>
        <end position="101"/>
    </location>
    <ligand>
        <name>substrate</name>
    </ligand>
</feature>
<feature type="binding site" evidence="1">
    <location>
        <position position="120"/>
    </location>
    <ligand>
        <name>substrate</name>
    </ligand>
</feature>
<feature type="binding site" evidence="1">
    <location>
        <position position="121"/>
    </location>
    <ligand>
        <name>Mg(2+)</name>
        <dbReference type="ChEBI" id="CHEBI:18420"/>
        <label>2</label>
    </ligand>
</feature>
<feature type="binding site" evidence="1">
    <location>
        <position position="244"/>
    </location>
    <ligand>
        <name>substrate</name>
    </ligand>
</feature>
<feature type="binding site" evidence="1">
    <location>
        <position position="272"/>
    </location>
    <ligand>
        <name>Mg(2+)</name>
        <dbReference type="ChEBI" id="CHEBI:18420"/>
        <label>2</label>
    </ligand>
</feature>
<feature type="binding site" evidence="1">
    <location>
        <begin position="316"/>
        <end position="318"/>
    </location>
    <ligand>
        <name>substrate</name>
    </ligand>
</feature>
<feature type="binding site" evidence="1">
    <location>
        <position position="504"/>
    </location>
    <ligand>
        <name>ATP</name>
        <dbReference type="ChEBI" id="CHEBI:30616"/>
    </ligand>
</feature>
<feature type="binding site" evidence="1">
    <location>
        <position position="541"/>
    </location>
    <ligand>
        <name>ATP</name>
        <dbReference type="ChEBI" id="CHEBI:30616"/>
    </ligand>
</feature>
<feature type="binding site" evidence="1">
    <location>
        <position position="542"/>
    </location>
    <ligand>
        <name>Mg(2+)</name>
        <dbReference type="ChEBI" id="CHEBI:18420"/>
        <label>1</label>
    </ligand>
</feature>
<feature type="binding site" evidence="1">
    <location>
        <position position="544"/>
    </location>
    <ligand>
        <name>substrate</name>
    </ligand>
</feature>
<name>PURL_SALRD</name>
<evidence type="ECO:0000255" key="1">
    <source>
        <dbReference type="HAMAP-Rule" id="MF_00420"/>
    </source>
</evidence>
<dbReference type="EC" id="6.3.5.3" evidence="1"/>
<dbReference type="EMBL" id="CP000159">
    <property type="protein sequence ID" value="ABC44070.1"/>
    <property type="molecule type" value="Genomic_DNA"/>
</dbReference>
<dbReference type="RefSeq" id="WP_011405368.1">
    <property type="nucleotide sequence ID" value="NC_007677.1"/>
</dbReference>
<dbReference type="RefSeq" id="YP_446754.1">
    <property type="nucleotide sequence ID" value="NC_007677.1"/>
</dbReference>
<dbReference type="SMR" id="Q2RZ77"/>
<dbReference type="STRING" id="309807.SRU_2656"/>
<dbReference type="EnsemblBacteria" id="ABC44070">
    <property type="protein sequence ID" value="ABC44070"/>
    <property type="gene ID" value="SRU_2656"/>
</dbReference>
<dbReference type="KEGG" id="sru:SRU_2656"/>
<dbReference type="PATRIC" id="fig|309807.25.peg.2768"/>
<dbReference type="eggNOG" id="COG0046">
    <property type="taxonomic scope" value="Bacteria"/>
</dbReference>
<dbReference type="HOGENOM" id="CLU_003100_0_1_10"/>
<dbReference type="OrthoDB" id="9804441at2"/>
<dbReference type="UniPathway" id="UPA00074">
    <property type="reaction ID" value="UER00128"/>
</dbReference>
<dbReference type="Proteomes" id="UP000008674">
    <property type="component" value="Chromosome"/>
</dbReference>
<dbReference type="GO" id="GO:0005737">
    <property type="term" value="C:cytoplasm"/>
    <property type="evidence" value="ECO:0007669"/>
    <property type="project" value="UniProtKB-SubCell"/>
</dbReference>
<dbReference type="GO" id="GO:0005524">
    <property type="term" value="F:ATP binding"/>
    <property type="evidence" value="ECO:0007669"/>
    <property type="project" value="UniProtKB-UniRule"/>
</dbReference>
<dbReference type="GO" id="GO:0000287">
    <property type="term" value="F:magnesium ion binding"/>
    <property type="evidence" value="ECO:0007669"/>
    <property type="project" value="UniProtKB-UniRule"/>
</dbReference>
<dbReference type="GO" id="GO:0004642">
    <property type="term" value="F:phosphoribosylformylglycinamidine synthase activity"/>
    <property type="evidence" value="ECO:0007669"/>
    <property type="project" value="UniProtKB-UniRule"/>
</dbReference>
<dbReference type="GO" id="GO:0006189">
    <property type="term" value="P:'de novo' IMP biosynthetic process"/>
    <property type="evidence" value="ECO:0007669"/>
    <property type="project" value="UniProtKB-UniRule"/>
</dbReference>
<dbReference type="CDD" id="cd02203">
    <property type="entry name" value="PurL_repeat1"/>
    <property type="match status" value="1"/>
</dbReference>
<dbReference type="CDD" id="cd02204">
    <property type="entry name" value="PurL_repeat2"/>
    <property type="match status" value="1"/>
</dbReference>
<dbReference type="FunFam" id="3.30.1330.10:FF:000004">
    <property type="entry name" value="Phosphoribosylformylglycinamidine synthase subunit PurL"/>
    <property type="match status" value="1"/>
</dbReference>
<dbReference type="Gene3D" id="3.90.650.10">
    <property type="entry name" value="PurM-like C-terminal domain"/>
    <property type="match status" value="2"/>
</dbReference>
<dbReference type="Gene3D" id="3.30.1330.10">
    <property type="entry name" value="PurM-like, N-terminal domain"/>
    <property type="match status" value="2"/>
</dbReference>
<dbReference type="HAMAP" id="MF_00420">
    <property type="entry name" value="PurL_2"/>
    <property type="match status" value="1"/>
</dbReference>
<dbReference type="InterPro" id="IPR010074">
    <property type="entry name" value="PRibForGlyAmidine_synth_PurL"/>
</dbReference>
<dbReference type="InterPro" id="IPR041609">
    <property type="entry name" value="PurL_linker"/>
</dbReference>
<dbReference type="InterPro" id="IPR010918">
    <property type="entry name" value="PurM-like_C_dom"/>
</dbReference>
<dbReference type="InterPro" id="IPR036676">
    <property type="entry name" value="PurM-like_C_sf"/>
</dbReference>
<dbReference type="InterPro" id="IPR016188">
    <property type="entry name" value="PurM-like_N"/>
</dbReference>
<dbReference type="InterPro" id="IPR036921">
    <property type="entry name" value="PurM-like_N_sf"/>
</dbReference>
<dbReference type="NCBIfam" id="TIGR01736">
    <property type="entry name" value="FGAM_synth_II"/>
    <property type="match status" value="1"/>
</dbReference>
<dbReference type="NCBIfam" id="NF002290">
    <property type="entry name" value="PRK01213.1"/>
    <property type="match status" value="1"/>
</dbReference>
<dbReference type="PANTHER" id="PTHR43555">
    <property type="entry name" value="PHOSPHORIBOSYLFORMYLGLYCINAMIDINE SYNTHASE SUBUNIT PURL"/>
    <property type="match status" value="1"/>
</dbReference>
<dbReference type="PANTHER" id="PTHR43555:SF1">
    <property type="entry name" value="PHOSPHORIBOSYLFORMYLGLYCINAMIDINE SYNTHASE SUBUNIT PURL"/>
    <property type="match status" value="1"/>
</dbReference>
<dbReference type="Pfam" id="PF00586">
    <property type="entry name" value="AIRS"/>
    <property type="match status" value="2"/>
</dbReference>
<dbReference type="Pfam" id="PF02769">
    <property type="entry name" value="AIRS_C"/>
    <property type="match status" value="2"/>
</dbReference>
<dbReference type="Pfam" id="PF18072">
    <property type="entry name" value="FGAR-AT_linker"/>
    <property type="match status" value="1"/>
</dbReference>
<dbReference type="PIRSF" id="PIRSF001587">
    <property type="entry name" value="FGAM_synthase_II"/>
    <property type="match status" value="1"/>
</dbReference>
<dbReference type="SUPFAM" id="SSF56042">
    <property type="entry name" value="PurM C-terminal domain-like"/>
    <property type="match status" value="2"/>
</dbReference>
<dbReference type="SUPFAM" id="SSF55326">
    <property type="entry name" value="PurM N-terminal domain-like"/>
    <property type="match status" value="2"/>
</dbReference>
<organism>
    <name type="scientific">Salinibacter ruber (strain DSM 13855 / M31)</name>
    <dbReference type="NCBI Taxonomy" id="309807"/>
    <lineage>
        <taxon>Bacteria</taxon>
        <taxon>Pseudomonadati</taxon>
        <taxon>Rhodothermota</taxon>
        <taxon>Rhodothermia</taxon>
        <taxon>Rhodothermales</taxon>
        <taxon>Salinibacteraceae</taxon>
        <taxon>Salinibacter</taxon>
    </lineage>
</organism>
<sequence>MPDTLPQPPEVDRDLALDHGLTDDEYDEILDRLGRTPTFTELGIYSVMWSEHCSYKNSTALLKTLPTEGDQLLAEVGEENAGLVDVGDGKAVAFKIESHNHPSAVEPYEGAATGVGGIHRDIFTMGARPICALDSLRFGSLEESRVRYLFDGVVRGIGDYGNSFGVPTVGGEVYFEDAYEGNPLVNAMSVGVVDTDQTARAAAETPGHHVILVGAATGRDGIHGATFASAEIDEDSEEDRPSVQVGDPFTEKLLLEATLEAIREGVVGSIQDMGAAGITSSAFEMSASGGTGMDLHLDRVPTRETGMTPYEIMLSESQERMLVVCEPGDEEALAEIYGKWDLNAQRIGTVTDTGRVRAYWDDEEVATLDPAHVAGDDVPVYERDTERPAYLEETRAFNTDDVPDLAPAEVEDTLTTLLGSPNIASKRWVHEQYDTMVRTNTVVGPGASDAAVVRLKGTGKGLAVKTDCNGRYVYLNPRRGAQIAVAEAARNVTCAGGTPVALTNCCNFGNPHNPEAYWAFAKAVEGMGDAGRALDTPVTGGNVSLYNEHPEGAIFPTPTIGMLGVVDDIDTQPTAAALQNEGDALFLLTPRDWCHPERTDGSEYLSTVHDRTAGDAPHLDLDEEVAVQSATQALIREGLVQHAHDVSDGGLAVCLAESVIHSDGLGLEATLPAADRLDAALFGEAQSRVVVSVRPDDALALDAALTDHNGVRARRLGAVTTGPLRLTVGDEPVLDASPAALTAPYEAALPDAVT</sequence>
<reference key="1">
    <citation type="journal article" date="2005" name="Proc. Natl. Acad. Sci. U.S.A.">
        <title>The genome of Salinibacter ruber: convergence and gene exchange among hyperhalophilic bacteria and archaea.</title>
        <authorList>
            <person name="Mongodin E.F."/>
            <person name="Nelson K.E."/>
            <person name="Daugherty S."/>
            <person name="DeBoy R.T."/>
            <person name="Wister J."/>
            <person name="Khouri H."/>
            <person name="Weidman J."/>
            <person name="Walsh D.A."/>
            <person name="Papke R.T."/>
            <person name="Sanchez Perez G."/>
            <person name="Sharma A.K."/>
            <person name="Nesbo C.L."/>
            <person name="MacLeod D."/>
            <person name="Bapteste E."/>
            <person name="Doolittle W.F."/>
            <person name="Charlebois R.L."/>
            <person name="Legault B."/>
            <person name="Rodriguez-Valera F."/>
        </authorList>
    </citation>
    <scope>NUCLEOTIDE SEQUENCE [LARGE SCALE GENOMIC DNA]</scope>
    <source>
        <strain>DSM 13855 / CECT 5946 / M31</strain>
    </source>
</reference>
<keyword id="KW-0067">ATP-binding</keyword>
<keyword id="KW-0963">Cytoplasm</keyword>
<keyword id="KW-0436">Ligase</keyword>
<keyword id="KW-0460">Magnesium</keyword>
<keyword id="KW-0479">Metal-binding</keyword>
<keyword id="KW-0547">Nucleotide-binding</keyword>
<keyword id="KW-0658">Purine biosynthesis</keyword>
<keyword id="KW-1185">Reference proteome</keyword>
<protein>
    <recommendedName>
        <fullName evidence="1">Phosphoribosylformylglycinamidine synthase subunit PurL</fullName>
        <shortName evidence="1">FGAM synthase</shortName>
        <ecNumber evidence="1">6.3.5.3</ecNumber>
    </recommendedName>
    <alternativeName>
        <fullName evidence="1">Formylglycinamide ribonucleotide amidotransferase subunit II</fullName>
        <shortName evidence="1">FGAR amidotransferase II</shortName>
        <shortName evidence="1">FGAR-AT II</shortName>
    </alternativeName>
    <alternativeName>
        <fullName evidence="1">Glutamine amidotransferase PurL</fullName>
    </alternativeName>
    <alternativeName>
        <fullName evidence="1">Phosphoribosylformylglycinamidine synthase subunit II</fullName>
    </alternativeName>
</protein>
<comment type="function">
    <text evidence="1">Part of the phosphoribosylformylglycinamidine synthase complex involved in the purines biosynthetic pathway. Catalyzes the ATP-dependent conversion of formylglycinamide ribonucleotide (FGAR) and glutamine to yield formylglycinamidine ribonucleotide (FGAM) and glutamate. The FGAM synthase complex is composed of three subunits. PurQ produces an ammonia molecule by converting glutamine to glutamate. PurL transfers the ammonia molecule to FGAR to form FGAM in an ATP-dependent manner. PurS interacts with PurQ and PurL and is thought to assist in the transfer of the ammonia molecule from PurQ to PurL.</text>
</comment>
<comment type="catalytic activity">
    <reaction evidence="1">
        <text>N(2)-formyl-N(1)-(5-phospho-beta-D-ribosyl)glycinamide + L-glutamine + ATP + H2O = 2-formamido-N(1)-(5-O-phospho-beta-D-ribosyl)acetamidine + L-glutamate + ADP + phosphate + H(+)</text>
        <dbReference type="Rhea" id="RHEA:17129"/>
        <dbReference type="ChEBI" id="CHEBI:15377"/>
        <dbReference type="ChEBI" id="CHEBI:15378"/>
        <dbReference type="ChEBI" id="CHEBI:29985"/>
        <dbReference type="ChEBI" id="CHEBI:30616"/>
        <dbReference type="ChEBI" id="CHEBI:43474"/>
        <dbReference type="ChEBI" id="CHEBI:58359"/>
        <dbReference type="ChEBI" id="CHEBI:147286"/>
        <dbReference type="ChEBI" id="CHEBI:147287"/>
        <dbReference type="ChEBI" id="CHEBI:456216"/>
        <dbReference type="EC" id="6.3.5.3"/>
    </reaction>
</comment>
<comment type="pathway">
    <text evidence="1">Purine metabolism; IMP biosynthesis via de novo pathway; 5-amino-1-(5-phospho-D-ribosyl)imidazole from N(2)-formyl-N(1)-(5-phospho-D-ribosyl)glycinamide: step 1/2.</text>
</comment>
<comment type="subunit">
    <text evidence="1">Monomer. Part of the FGAM synthase complex composed of 1 PurL, 1 PurQ and 2 PurS subunits.</text>
</comment>
<comment type="subcellular location">
    <subcellularLocation>
        <location evidence="1">Cytoplasm</location>
    </subcellularLocation>
</comment>
<comment type="similarity">
    <text evidence="1">Belongs to the FGAMS family.</text>
</comment>
<proteinExistence type="inferred from homology"/>
<accession>Q2RZ77</accession>
<gene>
    <name evidence="1" type="primary">purL</name>
    <name type="ordered locus">SRU_2656</name>
</gene>